<feature type="chain" id="PRO_0000354061" description="RasGEF domain-containing serine/threonine-protein kinase X">
    <location>
        <begin position="1"/>
        <end position="960"/>
    </location>
</feature>
<feature type="domain" description="Protein kinase" evidence="3">
    <location>
        <begin position="21"/>
        <end position="274"/>
    </location>
</feature>
<feature type="domain" description="N-terminal Ras-GEF" evidence="2">
    <location>
        <begin position="437"/>
        <end position="565"/>
    </location>
</feature>
<feature type="domain" description="Ras-GEF" evidence="4">
    <location>
        <begin position="712"/>
        <end position="957"/>
    </location>
</feature>
<feature type="region of interest" description="Disordered" evidence="6">
    <location>
        <begin position="314"/>
        <end position="372"/>
    </location>
</feature>
<feature type="region of interest" description="Disordered" evidence="6">
    <location>
        <begin position="393"/>
        <end position="413"/>
    </location>
</feature>
<feature type="region of interest" description="Disordered" evidence="6">
    <location>
        <begin position="596"/>
        <end position="651"/>
    </location>
</feature>
<feature type="compositionally biased region" description="Low complexity" evidence="6">
    <location>
        <begin position="314"/>
        <end position="368"/>
    </location>
</feature>
<feature type="active site" description="Proton acceptor" evidence="3 5">
    <location>
        <position position="140"/>
    </location>
</feature>
<feature type="binding site" evidence="3">
    <location>
        <begin position="27"/>
        <end position="35"/>
    </location>
    <ligand>
        <name>ATP</name>
        <dbReference type="ChEBI" id="CHEBI:30616"/>
    </ligand>
</feature>
<feature type="binding site" evidence="3">
    <location>
        <position position="48"/>
    </location>
    <ligand>
        <name>ATP</name>
        <dbReference type="ChEBI" id="CHEBI:30616"/>
    </ligand>
</feature>
<name>GEFX_DICDI</name>
<sequence>MAEADPGLPTQAIWDIPFESLEFNEKIGKGSFGSVFRGCYLGLDVAIKKIEKADDPEYLKYIDREVSMLQSLRHPFIVNFSGICVHSSGLYIVTEFVSGGDVRQLLKKTPPIGWDKRVSIAVDLAKAMVFLHAKKIIHRDLKSKNILLDEFQRIRLCDFGFARMSEQTKKSRHMTMCGTEGWVAPEILLGMSYDTSCDVFSYGVVLAELITGRKPGVDLWVRSPETCFDINPEELKQKSIPGCPSELISVCVECCLYEPLTRPKFDEILSQLKVCQNNLKVATAAAAAAAAAAAAAAAVVSTPTIQTPIIQTPNISFSPNNSNNNNNNNNNISNISPDITTGIQQINLSSSGGSNNSSPSTPPQGSQLVSLAQSRRNTMSLHRKSMELNLVDGQLSTTPPPTSPIQSRPHKPSDSIWKIAAKPKHVGYQTLKRKQGPCYAALTSHITKMIERATSDYYYDTSYIQDFLLAYRCFAPPQQIFELLLSRYIANSPDNFTNDINGWKKVQRVIQLRVIIFFKRWIDYYPQDFLEEAMEDNLNEFDKISAQQNSSTALLLGTTISNNELLIDPKLMTELQKKRSELELLIQINSPSDFINNNNNNNNNPVNNINNINNNNSVNSSSSNNNNNNNNNNSNNNNNNNNNNNNNNNNNNGLNIINIAAANQSKMMLQNGNNRYSVLVTSNGIGNGEEPYPVSIIPPPTTSEYLDVKDIHSTELARQITIINSFYFNRIKAREFIEYIWEKCGEESTTTPYVGTSFVEVVPAENIHKFVRKCNNLARFVSTEILKQTKLQKRVATIERFIEAAEKCLANNDYAAVFSIVEPLVDQSIERLSDTWRNVSQRNLATFEHLKSIVSKENDHKKYRELLPDAKPPCIPNIHLLLDELSFIETSSPRLLPGGIVNFFHYRQLSRKILQSQQLQSHCFRPIPSIQKVLTKPPSELFDDELIKNNSLKCEPPVSL</sequence>
<proteinExistence type="evidence at transcript level"/>
<organism>
    <name type="scientific">Dictyostelium discoideum</name>
    <name type="common">Social amoeba</name>
    <dbReference type="NCBI Taxonomy" id="44689"/>
    <lineage>
        <taxon>Eukaryota</taxon>
        <taxon>Amoebozoa</taxon>
        <taxon>Evosea</taxon>
        <taxon>Eumycetozoa</taxon>
        <taxon>Dictyostelia</taxon>
        <taxon>Dictyosteliales</taxon>
        <taxon>Dictyosteliaceae</taxon>
        <taxon>Dictyostelium</taxon>
    </lineage>
</organism>
<gene>
    <name type="primary">gefX</name>
    <name type="ORF">DDB_G0269298</name>
</gene>
<accession>Q55EC7</accession>
<comment type="function">
    <text evidence="1">Promotes the exchange of Ras-bound GDP by GTP.</text>
</comment>
<comment type="catalytic activity">
    <reaction>
        <text>L-seryl-[protein] + ATP = O-phospho-L-seryl-[protein] + ADP + H(+)</text>
        <dbReference type="Rhea" id="RHEA:17989"/>
        <dbReference type="Rhea" id="RHEA-COMP:9863"/>
        <dbReference type="Rhea" id="RHEA-COMP:11604"/>
        <dbReference type="ChEBI" id="CHEBI:15378"/>
        <dbReference type="ChEBI" id="CHEBI:29999"/>
        <dbReference type="ChEBI" id="CHEBI:30616"/>
        <dbReference type="ChEBI" id="CHEBI:83421"/>
        <dbReference type="ChEBI" id="CHEBI:456216"/>
        <dbReference type="EC" id="2.7.11.1"/>
    </reaction>
</comment>
<comment type="catalytic activity">
    <reaction>
        <text>L-threonyl-[protein] + ATP = O-phospho-L-threonyl-[protein] + ADP + H(+)</text>
        <dbReference type="Rhea" id="RHEA:46608"/>
        <dbReference type="Rhea" id="RHEA-COMP:11060"/>
        <dbReference type="Rhea" id="RHEA-COMP:11605"/>
        <dbReference type="ChEBI" id="CHEBI:15378"/>
        <dbReference type="ChEBI" id="CHEBI:30013"/>
        <dbReference type="ChEBI" id="CHEBI:30616"/>
        <dbReference type="ChEBI" id="CHEBI:61977"/>
        <dbReference type="ChEBI" id="CHEBI:456216"/>
        <dbReference type="EC" id="2.7.11.1"/>
    </reaction>
</comment>
<comment type="developmental stage">
    <text evidence="7">Clearly expressed during growth and development. Expression culminates at 8-12 hours of development and is still clearly detectable at 18 hours of development.</text>
</comment>
<comment type="similarity">
    <text evidence="8">Belongs to the protein kinase superfamily. TKL Ser/Thr protein kinase family.</text>
</comment>
<protein>
    <recommendedName>
        <fullName>RasGEF domain-containing serine/threonine-protein kinase X</fullName>
        <ecNumber>2.7.11.1</ecNumber>
    </recommendedName>
    <alternativeName>
        <fullName>Ras guanine nucleotide exchange factor X</fullName>
    </alternativeName>
    <alternativeName>
        <fullName>RasGEF domain-containing protein X</fullName>
    </alternativeName>
</protein>
<dbReference type="EC" id="2.7.11.1"/>
<dbReference type="EMBL" id="AAFI02000005">
    <property type="protein sequence ID" value="EAL71999.1"/>
    <property type="molecule type" value="Genomic_DNA"/>
</dbReference>
<dbReference type="RefSeq" id="XP_645854.1">
    <property type="nucleotide sequence ID" value="XM_640762.1"/>
</dbReference>
<dbReference type="SMR" id="Q55EC7"/>
<dbReference type="FunCoup" id="Q55EC7">
    <property type="interactions" value="130"/>
</dbReference>
<dbReference type="STRING" id="44689.Q55EC7"/>
<dbReference type="GlyGen" id="Q55EC7">
    <property type="glycosylation" value="1 site"/>
</dbReference>
<dbReference type="PaxDb" id="44689-DDB0229854"/>
<dbReference type="EnsemblProtists" id="EAL71999">
    <property type="protein sequence ID" value="EAL71999"/>
    <property type="gene ID" value="DDB_G0269298"/>
</dbReference>
<dbReference type="GeneID" id="8616798"/>
<dbReference type="KEGG" id="ddi:DDB_G0269298"/>
<dbReference type="dictyBase" id="DDB_G0269298">
    <property type="gene designation" value="gefX"/>
</dbReference>
<dbReference type="VEuPathDB" id="AmoebaDB:DDB_G0269298"/>
<dbReference type="eggNOG" id="KOG0192">
    <property type="taxonomic scope" value="Eukaryota"/>
</dbReference>
<dbReference type="eggNOG" id="KOG3417">
    <property type="taxonomic scope" value="Eukaryota"/>
</dbReference>
<dbReference type="HOGENOM" id="CLU_307855_0_0_1"/>
<dbReference type="InParanoid" id="Q55EC7"/>
<dbReference type="OMA" id="KRWIDYY"/>
<dbReference type="PhylomeDB" id="Q55EC7"/>
<dbReference type="PRO" id="PR:Q55EC7"/>
<dbReference type="Proteomes" id="UP000002195">
    <property type="component" value="Chromosome 1"/>
</dbReference>
<dbReference type="GO" id="GO:0005737">
    <property type="term" value="C:cytoplasm"/>
    <property type="evidence" value="ECO:0000318"/>
    <property type="project" value="GO_Central"/>
</dbReference>
<dbReference type="GO" id="GO:0005886">
    <property type="term" value="C:plasma membrane"/>
    <property type="evidence" value="ECO:0000314"/>
    <property type="project" value="dictyBase"/>
</dbReference>
<dbReference type="GO" id="GO:0031143">
    <property type="term" value="C:pseudopodium"/>
    <property type="evidence" value="ECO:0000314"/>
    <property type="project" value="dictyBase"/>
</dbReference>
<dbReference type="GO" id="GO:0005524">
    <property type="term" value="F:ATP binding"/>
    <property type="evidence" value="ECO:0007669"/>
    <property type="project" value="UniProtKB-KW"/>
</dbReference>
<dbReference type="GO" id="GO:0005085">
    <property type="term" value="F:guanyl-nucleotide exchange factor activity"/>
    <property type="evidence" value="ECO:0007669"/>
    <property type="project" value="UniProtKB-KW"/>
</dbReference>
<dbReference type="GO" id="GO:0004672">
    <property type="term" value="F:protein kinase activity"/>
    <property type="evidence" value="ECO:0000318"/>
    <property type="project" value="GO_Central"/>
</dbReference>
<dbReference type="GO" id="GO:0106310">
    <property type="term" value="F:protein serine kinase activity"/>
    <property type="evidence" value="ECO:0007669"/>
    <property type="project" value="RHEA"/>
</dbReference>
<dbReference type="GO" id="GO:0004674">
    <property type="term" value="F:protein serine/threonine kinase activity"/>
    <property type="evidence" value="ECO:0007669"/>
    <property type="project" value="UniProtKB-KW"/>
</dbReference>
<dbReference type="GO" id="GO:0019954">
    <property type="term" value="P:asexual reproduction"/>
    <property type="evidence" value="ECO:0000315"/>
    <property type="project" value="dictyBase"/>
</dbReference>
<dbReference type="GO" id="GO:1905303">
    <property type="term" value="P:positive regulation of macropinocytosis"/>
    <property type="evidence" value="ECO:0000315"/>
    <property type="project" value="dictyBase"/>
</dbReference>
<dbReference type="GO" id="GO:2000145">
    <property type="term" value="P:regulation of cell motility"/>
    <property type="evidence" value="ECO:0000315"/>
    <property type="project" value="dictyBase"/>
</dbReference>
<dbReference type="GO" id="GO:0031272">
    <property type="term" value="P:regulation of pseudopodium assembly"/>
    <property type="evidence" value="ECO:0000315"/>
    <property type="project" value="dictyBase"/>
</dbReference>
<dbReference type="GO" id="GO:0007165">
    <property type="term" value="P:signal transduction"/>
    <property type="evidence" value="ECO:0000318"/>
    <property type="project" value="GO_Central"/>
</dbReference>
<dbReference type="GO" id="GO:0007264">
    <property type="term" value="P:small GTPase-mediated signal transduction"/>
    <property type="evidence" value="ECO:0007669"/>
    <property type="project" value="InterPro"/>
</dbReference>
<dbReference type="CDD" id="cd06224">
    <property type="entry name" value="REM"/>
    <property type="match status" value="1"/>
</dbReference>
<dbReference type="CDD" id="cd13999">
    <property type="entry name" value="STKc_MAP3K-like"/>
    <property type="match status" value="1"/>
</dbReference>
<dbReference type="FunFam" id="3.30.200.20:FF:000034">
    <property type="entry name" value="Kinase suppressor of Ras 1"/>
    <property type="match status" value="1"/>
</dbReference>
<dbReference type="Gene3D" id="3.30.200.20">
    <property type="entry name" value="Phosphorylase Kinase, domain 1"/>
    <property type="match status" value="1"/>
</dbReference>
<dbReference type="Gene3D" id="1.10.840.10">
    <property type="entry name" value="Ras guanine-nucleotide exchange factors catalytic domain"/>
    <property type="match status" value="1"/>
</dbReference>
<dbReference type="Gene3D" id="1.20.870.10">
    <property type="entry name" value="Son of sevenless (SoS) protein Chain: S domain 1"/>
    <property type="match status" value="1"/>
</dbReference>
<dbReference type="Gene3D" id="1.10.510.10">
    <property type="entry name" value="Transferase(Phosphotransferase) domain 1"/>
    <property type="match status" value="1"/>
</dbReference>
<dbReference type="InterPro" id="IPR050940">
    <property type="entry name" value="Actin_reg-Ser/Thr_kinase"/>
</dbReference>
<dbReference type="InterPro" id="IPR011009">
    <property type="entry name" value="Kinase-like_dom_sf"/>
</dbReference>
<dbReference type="InterPro" id="IPR000719">
    <property type="entry name" value="Prot_kinase_dom"/>
</dbReference>
<dbReference type="InterPro" id="IPR017441">
    <property type="entry name" value="Protein_kinase_ATP_BS"/>
</dbReference>
<dbReference type="InterPro" id="IPR000651">
    <property type="entry name" value="Ras-like_Gua-exchang_fac_N"/>
</dbReference>
<dbReference type="InterPro" id="IPR023578">
    <property type="entry name" value="Ras_GEF_dom_sf"/>
</dbReference>
<dbReference type="InterPro" id="IPR001895">
    <property type="entry name" value="RASGEF_cat_dom"/>
</dbReference>
<dbReference type="InterPro" id="IPR036964">
    <property type="entry name" value="RASGEF_cat_dom_sf"/>
</dbReference>
<dbReference type="InterPro" id="IPR001245">
    <property type="entry name" value="Ser-Thr/Tyr_kinase_cat_dom"/>
</dbReference>
<dbReference type="InterPro" id="IPR008271">
    <property type="entry name" value="Ser/Thr_kinase_AS"/>
</dbReference>
<dbReference type="PANTHER" id="PTHR46485:SF5">
    <property type="entry name" value="CENTER DIVIDER, ISOFORM A"/>
    <property type="match status" value="1"/>
</dbReference>
<dbReference type="PANTHER" id="PTHR46485">
    <property type="entry name" value="LIM DOMAIN KINASE 1"/>
    <property type="match status" value="1"/>
</dbReference>
<dbReference type="Pfam" id="PF07714">
    <property type="entry name" value="PK_Tyr_Ser-Thr"/>
    <property type="match status" value="1"/>
</dbReference>
<dbReference type="Pfam" id="PF00617">
    <property type="entry name" value="RasGEF"/>
    <property type="match status" value="1"/>
</dbReference>
<dbReference type="Pfam" id="PF00618">
    <property type="entry name" value="RasGEF_N"/>
    <property type="match status" value="1"/>
</dbReference>
<dbReference type="PRINTS" id="PR00109">
    <property type="entry name" value="TYRKINASE"/>
</dbReference>
<dbReference type="SMART" id="SM00147">
    <property type="entry name" value="RasGEF"/>
    <property type="match status" value="1"/>
</dbReference>
<dbReference type="SMART" id="SM00229">
    <property type="entry name" value="RasGEFN"/>
    <property type="match status" value="1"/>
</dbReference>
<dbReference type="SMART" id="SM00220">
    <property type="entry name" value="S_TKc"/>
    <property type="match status" value="1"/>
</dbReference>
<dbReference type="SUPFAM" id="SSF56112">
    <property type="entry name" value="Protein kinase-like (PK-like)"/>
    <property type="match status" value="1"/>
</dbReference>
<dbReference type="SUPFAM" id="SSF48366">
    <property type="entry name" value="Ras GEF"/>
    <property type="match status" value="1"/>
</dbReference>
<dbReference type="PROSITE" id="PS00107">
    <property type="entry name" value="PROTEIN_KINASE_ATP"/>
    <property type="match status" value="1"/>
</dbReference>
<dbReference type="PROSITE" id="PS50011">
    <property type="entry name" value="PROTEIN_KINASE_DOM"/>
    <property type="match status" value="1"/>
</dbReference>
<dbReference type="PROSITE" id="PS00108">
    <property type="entry name" value="PROTEIN_KINASE_ST"/>
    <property type="match status" value="1"/>
</dbReference>
<dbReference type="PROSITE" id="PS50009">
    <property type="entry name" value="RASGEF_CAT"/>
    <property type="match status" value="1"/>
</dbReference>
<dbReference type="PROSITE" id="PS50212">
    <property type="entry name" value="RASGEF_NTER"/>
    <property type="match status" value="1"/>
</dbReference>
<reference key="1">
    <citation type="journal article" date="2005" name="Nature">
        <title>The genome of the social amoeba Dictyostelium discoideum.</title>
        <authorList>
            <person name="Eichinger L."/>
            <person name="Pachebat J.A."/>
            <person name="Gloeckner G."/>
            <person name="Rajandream M.A."/>
            <person name="Sucgang R."/>
            <person name="Berriman M."/>
            <person name="Song J."/>
            <person name="Olsen R."/>
            <person name="Szafranski K."/>
            <person name="Xu Q."/>
            <person name="Tunggal B."/>
            <person name="Kummerfeld S."/>
            <person name="Madera M."/>
            <person name="Konfortov B.A."/>
            <person name="Rivero F."/>
            <person name="Bankier A.T."/>
            <person name="Lehmann R."/>
            <person name="Hamlin N."/>
            <person name="Davies R."/>
            <person name="Gaudet P."/>
            <person name="Fey P."/>
            <person name="Pilcher K."/>
            <person name="Chen G."/>
            <person name="Saunders D."/>
            <person name="Sodergren E.J."/>
            <person name="Davis P."/>
            <person name="Kerhornou A."/>
            <person name="Nie X."/>
            <person name="Hall N."/>
            <person name="Anjard C."/>
            <person name="Hemphill L."/>
            <person name="Bason N."/>
            <person name="Farbrother P."/>
            <person name="Desany B."/>
            <person name="Just E."/>
            <person name="Morio T."/>
            <person name="Rost R."/>
            <person name="Churcher C.M."/>
            <person name="Cooper J."/>
            <person name="Haydock S."/>
            <person name="van Driessche N."/>
            <person name="Cronin A."/>
            <person name="Goodhead I."/>
            <person name="Muzny D.M."/>
            <person name="Mourier T."/>
            <person name="Pain A."/>
            <person name="Lu M."/>
            <person name="Harper D."/>
            <person name="Lindsay R."/>
            <person name="Hauser H."/>
            <person name="James K.D."/>
            <person name="Quiles M."/>
            <person name="Madan Babu M."/>
            <person name="Saito T."/>
            <person name="Buchrieser C."/>
            <person name="Wardroper A."/>
            <person name="Felder M."/>
            <person name="Thangavelu M."/>
            <person name="Johnson D."/>
            <person name="Knights A."/>
            <person name="Loulseged H."/>
            <person name="Mungall K.L."/>
            <person name="Oliver K."/>
            <person name="Price C."/>
            <person name="Quail M.A."/>
            <person name="Urushihara H."/>
            <person name="Hernandez J."/>
            <person name="Rabbinowitsch E."/>
            <person name="Steffen D."/>
            <person name="Sanders M."/>
            <person name="Ma J."/>
            <person name="Kohara Y."/>
            <person name="Sharp S."/>
            <person name="Simmonds M.N."/>
            <person name="Spiegler S."/>
            <person name="Tivey A."/>
            <person name="Sugano S."/>
            <person name="White B."/>
            <person name="Walker D."/>
            <person name="Woodward J.R."/>
            <person name="Winckler T."/>
            <person name="Tanaka Y."/>
            <person name="Shaulsky G."/>
            <person name="Schleicher M."/>
            <person name="Weinstock G.M."/>
            <person name="Rosenthal A."/>
            <person name="Cox E.C."/>
            <person name="Chisholm R.L."/>
            <person name="Gibbs R.A."/>
            <person name="Loomis W.F."/>
            <person name="Platzer M."/>
            <person name="Kay R.R."/>
            <person name="Williams J.G."/>
            <person name="Dear P.H."/>
            <person name="Noegel A.A."/>
            <person name="Barrell B.G."/>
            <person name="Kuspa A."/>
        </authorList>
    </citation>
    <scope>NUCLEOTIDE SEQUENCE [LARGE SCALE GENOMIC DNA]</scope>
    <source>
        <strain>AX4</strain>
    </source>
</reference>
<reference key="2">
    <citation type="journal article" date="2005" name="Genome Biol.">
        <title>The Dictyostelium genome encodes numerous RasGEFs with multiple biological roles.</title>
        <authorList>
            <person name="Wilkins A."/>
            <person name="Szafranski K."/>
            <person name="Fraser D.J."/>
            <person name="Bakthavatsalam D."/>
            <person name="Mueller R."/>
            <person name="Fisher P.R."/>
            <person name="Gloeckner G."/>
            <person name="Eichinger L."/>
            <person name="Noegel A.A."/>
            <person name="Insall R.H."/>
        </authorList>
    </citation>
    <scope>DEVELOPMENTAL STAGE</scope>
</reference>
<keyword id="KW-0067">ATP-binding</keyword>
<keyword id="KW-0344">Guanine-nucleotide releasing factor</keyword>
<keyword id="KW-0418">Kinase</keyword>
<keyword id="KW-0547">Nucleotide-binding</keyword>
<keyword id="KW-1185">Reference proteome</keyword>
<keyword id="KW-0723">Serine/threonine-protein kinase</keyword>
<keyword id="KW-0808">Transferase</keyword>
<evidence type="ECO:0000250" key="1"/>
<evidence type="ECO:0000255" key="2">
    <source>
        <dbReference type="PROSITE-ProRule" id="PRU00135"/>
    </source>
</evidence>
<evidence type="ECO:0000255" key="3">
    <source>
        <dbReference type="PROSITE-ProRule" id="PRU00159"/>
    </source>
</evidence>
<evidence type="ECO:0000255" key="4">
    <source>
        <dbReference type="PROSITE-ProRule" id="PRU00168"/>
    </source>
</evidence>
<evidence type="ECO:0000255" key="5">
    <source>
        <dbReference type="PROSITE-ProRule" id="PRU10027"/>
    </source>
</evidence>
<evidence type="ECO:0000256" key="6">
    <source>
        <dbReference type="SAM" id="MobiDB-lite"/>
    </source>
</evidence>
<evidence type="ECO:0000269" key="7">
    <source>
    </source>
</evidence>
<evidence type="ECO:0000305" key="8"/>